<dbReference type="EMBL" id="AB012578">
    <property type="protein sequence ID" value="BAA89224.1"/>
    <property type="molecule type" value="Genomic_DNA"/>
</dbReference>
<dbReference type="SMR" id="Q9RHV8"/>
<dbReference type="STRING" id="292.WI67_15575"/>
<dbReference type="eggNOG" id="COG1651">
    <property type="taxonomic scope" value="Bacteria"/>
</dbReference>
<dbReference type="GO" id="GO:0042597">
    <property type="term" value="C:periplasmic space"/>
    <property type="evidence" value="ECO:0007669"/>
    <property type="project" value="UniProtKB-SubCell"/>
</dbReference>
<dbReference type="GO" id="GO:0015036">
    <property type="term" value="F:disulfide oxidoreductase activity"/>
    <property type="evidence" value="ECO:0007669"/>
    <property type="project" value="UniProtKB-ARBA"/>
</dbReference>
<dbReference type="CDD" id="cd03019">
    <property type="entry name" value="DsbA_DsbA"/>
    <property type="match status" value="1"/>
</dbReference>
<dbReference type="Gene3D" id="3.40.30.10">
    <property type="entry name" value="Glutaredoxin"/>
    <property type="match status" value="1"/>
</dbReference>
<dbReference type="InterPro" id="IPR001853">
    <property type="entry name" value="DSBA-like_thioredoxin_dom"/>
</dbReference>
<dbReference type="InterPro" id="IPR023205">
    <property type="entry name" value="DsbA/DsbL"/>
</dbReference>
<dbReference type="InterPro" id="IPR050824">
    <property type="entry name" value="Thiol_disulfide_DsbA"/>
</dbReference>
<dbReference type="InterPro" id="IPR036249">
    <property type="entry name" value="Thioredoxin-like_sf"/>
</dbReference>
<dbReference type="InterPro" id="IPR017937">
    <property type="entry name" value="Thioredoxin_CS"/>
</dbReference>
<dbReference type="InterPro" id="IPR013766">
    <property type="entry name" value="Thioredoxin_domain"/>
</dbReference>
<dbReference type="PANTHER" id="PTHR35891">
    <property type="entry name" value="THIOL:DISULFIDE INTERCHANGE PROTEIN DSBA"/>
    <property type="match status" value="1"/>
</dbReference>
<dbReference type="PANTHER" id="PTHR35891:SF3">
    <property type="entry name" value="THIOL:DISULFIDE INTERCHANGE PROTEIN DSBL"/>
    <property type="match status" value="1"/>
</dbReference>
<dbReference type="Pfam" id="PF01323">
    <property type="entry name" value="DSBA"/>
    <property type="match status" value="1"/>
</dbReference>
<dbReference type="PIRSF" id="PIRSF001488">
    <property type="entry name" value="Tdi_protein"/>
    <property type="match status" value="1"/>
</dbReference>
<dbReference type="SUPFAM" id="SSF52833">
    <property type="entry name" value="Thioredoxin-like"/>
    <property type="match status" value="1"/>
</dbReference>
<dbReference type="PROSITE" id="PS00194">
    <property type="entry name" value="THIOREDOXIN_1"/>
    <property type="match status" value="1"/>
</dbReference>
<dbReference type="PROSITE" id="PS51352">
    <property type="entry name" value="THIOREDOXIN_2"/>
    <property type="match status" value="1"/>
</dbReference>
<protein>
    <recommendedName>
        <fullName>Thiol:disulfide interchange protein DsbA</fullName>
    </recommendedName>
</protein>
<reference key="1">
    <citation type="journal article" date="2000" name="Microbiol. Immunol.">
        <title>The DsbA-DsbB disulfide bond formation system of Burkholderia cepacia is involved in the production of protease and alkaline phosphatase, motility, metal resistance, and multi-drug resistance.</title>
        <authorList>
            <person name="Hayashi S."/>
            <person name="Abe M."/>
            <person name="Kimoto M."/>
            <person name="Furukawa S."/>
            <person name="Nakazawa T."/>
        </authorList>
    </citation>
    <scope>NUCLEOTIDE SEQUENCE [GENOMIC DNA]</scope>
    <source>
        <strain>KF1</strain>
    </source>
</reference>
<sequence length="212" mass="23233">MKKLLSTLLLSLGLAAGLAQASPAAPASGKDFEVMKSPQPVSAPAGKVEVIEFFWYGCPHCYEFEPTIEAWVKKQGNNIDFKRVPVAFRDDFLPHSKLFYAVSALGISEKVTPAIFNAIHKQKNYLLTPQAQADFLATQGVDKKKFMDAYNSFSVQGEVNQSAKLLKDYAIDGVPTVVVQGKYKTGPAYTNSIPGTAQVLDFLVKQVQDKKL</sequence>
<name>DSBA_BURCE</name>
<evidence type="ECO:0000250" key="1"/>
<evidence type="ECO:0000255" key="2"/>
<evidence type="ECO:0000255" key="3">
    <source>
        <dbReference type="PROSITE-ProRule" id="PRU00691"/>
    </source>
</evidence>
<evidence type="ECO:0000305" key="4"/>
<organism>
    <name type="scientific">Burkholderia cepacia</name>
    <name type="common">Pseudomonas cepacia</name>
    <dbReference type="NCBI Taxonomy" id="292"/>
    <lineage>
        <taxon>Bacteria</taxon>
        <taxon>Pseudomonadati</taxon>
        <taxon>Pseudomonadota</taxon>
        <taxon>Betaproteobacteria</taxon>
        <taxon>Burkholderiales</taxon>
        <taxon>Burkholderiaceae</taxon>
        <taxon>Burkholderia</taxon>
        <taxon>Burkholderia cepacia complex</taxon>
    </lineage>
</organism>
<comment type="function">
    <text>Involved in disulfide-bond formation. Acts by transferring its disulfide bond to other proteins. Involved in the production of protease and alkaline phosphatase, motility, metal resistance, and multi-drug resistance.</text>
</comment>
<comment type="subcellular location">
    <subcellularLocation>
        <location evidence="1">Periplasm</location>
    </subcellularLocation>
</comment>
<comment type="similarity">
    <text evidence="4">Belongs to the thioredoxin family. DsbA subfamily.</text>
</comment>
<gene>
    <name type="primary">dsbA</name>
</gene>
<accession>Q9RHV8</accession>
<feature type="signal peptide" evidence="2">
    <location>
        <begin position="1"/>
        <end position="21"/>
    </location>
</feature>
<feature type="chain" id="PRO_0000034251" description="Thiol:disulfide interchange protein DsbA">
    <location>
        <begin position="22"/>
        <end position="212"/>
    </location>
</feature>
<feature type="disulfide bond" description="Redox-active" evidence="3">
    <location>
        <begin position="58"/>
        <end position="61"/>
    </location>
</feature>
<proteinExistence type="inferred from homology"/>
<keyword id="KW-1015">Disulfide bond</keyword>
<keyword id="KW-0574">Periplasm</keyword>
<keyword id="KW-0676">Redox-active center</keyword>
<keyword id="KW-0732">Signal</keyword>